<name>RL24_CLOTE</name>
<reference key="1">
    <citation type="journal article" date="2003" name="Proc. Natl. Acad. Sci. U.S.A.">
        <title>The genome sequence of Clostridium tetani, the causative agent of tetanus disease.</title>
        <authorList>
            <person name="Brueggemann H."/>
            <person name="Baeumer S."/>
            <person name="Fricke W.F."/>
            <person name="Wiezer A."/>
            <person name="Liesegang H."/>
            <person name="Decker I."/>
            <person name="Herzberg C."/>
            <person name="Martinez-Arias R."/>
            <person name="Merkl R."/>
            <person name="Henne A."/>
            <person name="Gottschalk G."/>
        </authorList>
    </citation>
    <scope>NUCLEOTIDE SEQUENCE [LARGE SCALE GENOMIC DNA]</scope>
    <source>
        <strain>Massachusetts / E88</strain>
    </source>
</reference>
<protein>
    <recommendedName>
        <fullName evidence="1">Large ribosomal subunit protein uL24</fullName>
    </recommendedName>
    <alternativeName>
        <fullName evidence="2">50S ribosomal protein L24</fullName>
    </alternativeName>
</protein>
<feature type="chain" id="PRO_0000130648" description="Large ribosomal subunit protein uL24">
    <location>
        <begin position="1"/>
        <end position="106"/>
    </location>
</feature>
<comment type="function">
    <text evidence="1">One of two assembly initiator proteins, it binds directly to the 5'-end of the 23S rRNA, where it nucleates assembly of the 50S subunit.</text>
</comment>
<comment type="function">
    <text evidence="1">One of the proteins that surrounds the polypeptide exit tunnel on the outside of the subunit.</text>
</comment>
<comment type="subunit">
    <text evidence="1">Part of the 50S ribosomal subunit.</text>
</comment>
<comment type="similarity">
    <text evidence="1">Belongs to the universal ribosomal protein uL24 family.</text>
</comment>
<evidence type="ECO:0000255" key="1">
    <source>
        <dbReference type="HAMAP-Rule" id="MF_01326"/>
    </source>
</evidence>
<evidence type="ECO:0000305" key="2"/>
<organism>
    <name type="scientific">Clostridium tetani (strain Massachusetts / E88)</name>
    <dbReference type="NCBI Taxonomy" id="212717"/>
    <lineage>
        <taxon>Bacteria</taxon>
        <taxon>Bacillati</taxon>
        <taxon>Bacillota</taxon>
        <taxon>Clostridia</taxon>
        <taxon>Eubacteriales</taxon>
        <taxon>Clostridiaceae</taxon>
        <taxon>Clostridium</taxon>
    </lineage>
</organism>
<proteinExistence type="inferred from homology"/>
<accession>Q890P7</accession>
<dbReference type="EMBL" id="AE015927">
    <property type="protein sequence ID" value="AAO37048.1"/>
    <property type="molecule type" value="Genomic_DNA"/>
</dbReference>
<dbReference type="RefSeq" id="WP_011100709.1">
    <property type="nucleotide sequence ID" value="NC_004557.1"/>
</dbReference>
<dbReference type="SMR" id="Q890P7"/>
<dbReference type="STRING" id="212717.CTC_02591"/>
<dbReference type="GeneID" id="24254813"/>
<dbReference type="KEGG" id="ctc:CTC_02591"/>
<dbReference type="HOGENOM" id="CLU_093315_2_3_9"/>
<dbReference type="OrthoDB" id="9807419at2"/>
<dbReference type="Proteomes" id="UP000001412">
    <property type="component" value="Chromosome"/>
</dbReference>
<dbReference type="GO" id="GO:1990904">
    <property type="term" value="C:ribonucleoprotein complex"/>
    <property type="evidence" value="ECO:0007669"/>
    <property type="project" value="UniProtKB-KW"/>
</dbReference>
<dbReference type="GO" id="GO:0005840">
    <property type="term" value="C:ribosome"/>
    <property type="evidence" value="ECO:0007669"/>
    <property type="project" value="UniProtKB-KW"/>
</dbReference>
<dbReference type="GO" id="GO:0019843">
    <property type="term" value="F:rRNA binding"/>
    <property type="evidence" value="ECO:0007669"/>
    <property type="project" value="UniProtKB-UniRule"/>
</dbReference>
<dbReference type="GO" id="GO:0003735">
    <property type="term" value="F:structural constituent of ribosome"/>
    <property type="evidence" value="ECO:0007669"/>
    <property type="project" value="InterPro"/>
</dbReference>
<dbReference type="GO" id="GO:0006412">
    <property type="term" value="P:translation"/>
    <property type="evidence" value="ECO:0007669"/>
    <property type="project" value="UniProtKB-UniRule"/>
</dbReference>
<dbReference type="CDD" id="cd06089">
    <property type="entry name" value="KOW_RPL26"/>
    <property type="match status" value="1"/>
</dbReference>
<dbReference type="FunFam" id="2.30.30.30:FF:000004">
    <property type="entry name" value="50S ribosomal protein L24"/>
    <property type="match status" value="1"/>
</dbReference>
<dbReference type="Gene3D" id="2.30.30.30">
    <property type="match status" value="1"/>
</dbReference>
<dbReference type="HAMAP" id="MF_01326_B">
    <property type="entry name" value="Ribosomal_uL24_B"/>
    <property type="match status" value="1"/>
</dbReference>
<dbReference type="InterPro" id="IPR005824">
    <property type="entry name" value="KOW"/>
</dbReference>
<dbReference type="InterPro" id="IPR014722">
    <property type="entry name" value="Rib_uL2_dom2"/>
</dbReference>
<dbReference type="InterPro" id="IPR003256">
    <property type="entry name" value="Ribosomal_uL24"/>
</dbReference>
<dbReference type="InterPro" id="IPR041988">
    <property type="entry name" value="Ribosomal_uL24_KOW"/>
</dbReference>
<dbReference type="InterPro" id="IPR008991">
    <property type="entry name" value="Translation_prot_SH3-like_sf"/>
</dbReference>
<dbReference type="NCBIfam" id="TIGR01079">
    <property type="entry name" value="rplX_bact"/>
    <property type="match status" value="1"/>
</dbReference>
<dbReference type="PANTHER" id="PTHR12903">
    <property type="entry name" value="MITOCHONDRIAL RIBOSOMAL PROTEIN L24"/>
    <property type="match status" value="1"/>
</dbReference>
<dbReference type="Pfam" id="PF00467">
    <property type="entry name" value="KOW"/>
    <property type="match status" value="1"/>
</dbReference>
<dbReference type="Pfam" id="PF17136">
    <property type="entry name" value="ribosomal_L24"/>
    <property type="match status" value="1"/>
</dbReference>
<dbReference type="SMART" id="SM00739">
    <property type="entry name" value="KOW"/>
    <property type="match status" value="1"/>
</dbReference>
<dbReference type="SUPFAM" id="SSF50104">
    <property type="entry name" value="Translation proteins SH3-like domain"/>
    <property type="match status" value="1"/>
</dbReference>
<sequence>MQNKVHVRKQDTVMVISGKDKGKIGEVLRVLPKSGKVVVKDVNVVTKHQKPSRENMQGGIIHVEAPIYSSKVMLYCTKCKSVTRINHKILDDGTKVRVCKKCGETF</sequence>
<gene>
    <name evidence="1" type="primary">rplX</name>
    <name type="ordered locus">CTC_02591</name>
</gene>
<keyword id="KW-1185">Reference proteome</keyword>
<keyword id="KW-0687">Ribonucleoprotein</keyword>
<keyword id="KW-0689">Ribosomal protein</keyword>
<keyword id="KW-0694">RNA-binding</keyword>
<keyword id="KW-0699">rRNA-binding</keyword>